<organism>
    <name type="scientific">Bordetella bronchiseptica (strain ATCC BAA-588 / NCTC 13252 / RB50)</name>
    <name type="common">Alcaligenes bronchisepticus</name>
    <dbReference type="NCBI Taxonomy" id="257310"/>
    <lineage>
        <taxon>Bacteria</taxon>
        <taxon>Pseudomonadati</taxon>
        <taxon>Pseudomonadota</taxon>
        <taxon>Betaproteobacteria</taxon>
        <taxon>Burkholderiales</taxon>
        <taxon>Alcaligenaceae</taxon>
        <taxon>Bordetella</taxon>
    </lineage>
</organism>
<evidence type="ECO:0000255" key="1">
    <source>
        <dbReference type="HAMAP-Rule" id="MF_00109"/>
    </source>
</evidence>
<evidence type="ECO:0000256" key="2">
    <source>
        <dbReference type="SAM" id="MobiDB-lite"/>
    </source>
</evidence>
<accession>Q7WR85</accession>
<name>AROK_BORBR</name>
<sequence length="211" mass="23083">MNASANLCAASDNDPQPGDQEAAHPVACAGDEPAAFLPHDLPIFLVGMMGAGKTTIGRGLARALRREFIDLDHELEARCGVRVPVIFEIEGEAGFRRREAAALQECTQRRQIILATGGGAVLAAENRQALRERGIVIYLRASVEELFRRTSRDRNRPLLATADPRATLRELMVAREPLYNEVADLVIDTGSMPIATLVKSLLPKLQAYEKK</sequence>
<feature type="chain" id="PRO_0000237850" description="Shikimate kinase">
    <location>
        <begin position="1"/>
        <end position="211"/>
    </location>
</feature>
<feature type="region of interest" description="Disordered" evidence="2">
    <location>
        <begin position="1"/>
        <end position="23"/>
    </location>
</feature>
<feature type="binding site" evidence="1">
    <location>
        <begin position="50"/>
        <end position="55"/>
    </location>
    <ligand>
        <name>ATP</name>
        <dbReference type="ChEBI" id="CHEBI:30616"/>
    </ligand>
</feature>
<feature type="binding site" evidence="1">
    <location>
        <position position="54"/>
    </location>
    <ligand>
        <name>Mg(2+)</name>
        <dbReference type="ChEBI" id="CHEBI:18420"/>
    </ligand>
</feature>
<feature type="binding site" evidence="1">
    <location>
        <position position="72"/>
    </location>
    <ligand>
        <name>substrate</name>
    </ligand>
</feature>
<feature type="binding site" evidence="1">
    <location>
        <position position="96"/>
    </location>
    <ligand>
        <name>substrate</name>
    </ligand>
</feature>
<feature type="binding site" evidence="1">
    <location>
        <position position="118"/>
    </location>
    <ligand>
        <name>substrate</name>
    </ligand>
</feature>
<feature type="binding site" evidence="1">
    <location>
        <position position="156"/>
    </location>
    <ligand>
        <name>ATP</name>
        <dbReference type="ChEBI" id="CHEBI:30616"/>
    </ligand>
</feature>
<feature type="binding site" evidence="1">
    <location>
        <position position="175"/>
    </location>
    <ligand>
        <name>substrate</name>
    </ligand>
</feature>
<gene>
    <name evidence="1" type="primary">aroK</name>
    <name type="ordered locus">BB0071</name>
</gene>
<protein>
    <recommendedName>
        <fullName evidence="1">Shikimate kinase</fullName>
        <shortName evidence="1">SK</shortName>
        <ecNumber evidence="1">2.7.1.71</ecNumber>
    </recommendedName>
</protein>
<proteinExistence type="inferred from homology"/>
<dbReference type="EC" id="2.7.1.71" evidence="1"/>
<dbReference type="EMBL" id="BX640437">
    <property type="protein sequence ID" value="CAE30573.1"/>
    <property type="molecule type" value="Genomic_DNA"/>
</dbReference>
<dbReference type="RefSeq" id="WP_010925692.1">
    <property type="nucleotide sequence ID" value="NC_002927.3"/>
</dbReference>
<dbReference type="SMR" id="Q7WR85"/>
<dbReference type="KEGG" id="bbr:BB0071"/>
<dbReference type="eggNOG" id="COG0703">
    <property type="taxonomic scope" value="Bacteria"/>
</dbReference>
<dbReference type="HOGENOM" id="CLU_057607_2_2_4"/>
<dbReference type="UniPathway" id="UPA00053">
    <property type="reaction ID" value="UER00088"/>
</dbReference>
<dbReference type="Proteomes" id="UP000001027">
    <property type="component" value="Chromosome"/>
</dbReference>
<dbReference type="GO" id="GO:0005829">
    <property type="term" value="C:cytosol"/>
    <property type="evidence" value="ECO:0007669"/>
    <property type="project" value="TreeGrafter"/>
</dbReference>
<dbReference type="GO" id="GO:0005524">
    <property type="term" value="F:ATP binding"/>
    <property type="evidence" value="ECO:0007669"/>
    <property type="project" value="UniProtKB-UniRule"/>
</dbReference>
<dbReference type="GO" id="GO:0000287">
    <property type="term" value="F:magnesium ion binding"/>
    <property type="evidence" value="ECO:0007669"/>
    <property type="project" value="UniProtKB-UniRule"/>
</dbReference>
<dbReference type="GO" id="GO:0004765">
    <property type="term" value="F:shikimate kinase activity"/>
    <property type="evidence" value="ECO:0007669"/>
    <property type="project" value="UniProtKB-UniRule"/>
</dbReference>
<dbReference type="GO" id="GO:0008652">
    <property type="term" value="P:amino acid biosynthetic process"/>
    <property type="evidence" value="ECO:0007669"/>
    <property type="project" value="UniProtKB-KW"/>
</dbReference>
<dbReference type="GO" id="GO:0009073">
    <property type="term" value="P:aromatic amino acid family biosynthetic process"/>
    <property type="evidence" value="ECO:0007669"/>
    <property type="project" value="UniProtKB-KW"/>
</dbReference>
<dbReference type="GO" id="GO:0009423">
    <property type="term" value="P:chorismate biosynthetic process"/>
    <property type="evidence" value="ECO:0007669"/>
    <property type="project" value="UniProtKB-UniRule"/>
</dbReference>
<dbReference type="CDD" id="cd00464">
    <property type="entry name" value="SK"/>
    <property type="match status" value="1"/>
</dbReference>
<dbReference type="Gene3D" id="3.40.50.300">
    <property type="entry name" value="P-loop containing nucleotide triphosphate hydrolases"/>
    <property type="match status" value="1"/>
</dbReference>
<dbReference type="HAMAP" id="MF_00109">
    <property type="entry name" value="Shikimate_kinase"/>
    <property type="match status" value="1"/>
</dbReference>
<dbReference type="InterPro" id="IPR027417">
    <property type="entry name" value="P-loop_NTPase"/>
</dbReference>
<dbReference type="InterPro" id="IPR031322">
    <property type="entry name" value="Shikimate/glucono_kinase"/>
</dbReference>
<dbReference type="InterPro" id="IPR000623">
    <property type="entry name" value="Shikimate_kinase/TSH1"/>
</dbReference>
<dbReference type="InterPro" id="IPR023000">
    <property type="entry name" value="Shikimate_kinase_CS"/>
</dbReference>
<dbReference type="PANTHER" id="PTHR21087">
    <property type="entry name" value="SHIKIMATE KINASE"/>
    <property type="match status" value="1"/>
</dbReference>
<dbReference type="PANTHER" id="PTHR21087:SF16">
    <property type="entry name" value="SHIKIMATE KINASE 1, CHLOROPLASTIC"/>
    <property type="match status" value="1"/>
</dbReference>
<dbReference type="Pfam" id="PF01202">
    <property type="entry name" value="SKI"/>
    <property type="match status" value="1"/>
</dbReference>
<dbReference type="PRINTS" id="PR01100">
    <property type="entry name" value="SHIKIMTKNASE"/>
</dbReference>
<dbReference type="SUPFAM" id="SSF52540">
    <property type="entry name" value="P-loop containing nucleoside triphosphate hydrolases"/>
    <property type="match status" value="1"/>
</dbReference>
<dbReference type="PROSITE" id="PS01128">
    <property type="entry name" value="SHIKIMATE_KINASE"/>
    <property type="match status" value="1"/>
</dbReference>
<comment type="function">
    <text evidence="1">Catalyzes the specific phosphorylation of the 3-hydroxyl group of shikimic acid using ATP as a cosubstrate.</text>
</comment>
<comment type="catalytic activity">
    <reaction evidence="1">
        <text>shikimate + ATP = 3-phosphoshikimate + ADP + H(+)</text>
        <dbReference type="Rhea" id="RHEA:13121"/>
        <dbReference type="ChEBI" id="CHEBI:15378"/>
        <dbReference type="ChEBI" id="CHEBI:30616"/>
        <dbReference type="ChEBI" id="CHEBI:36208"/>
        <dbReference type="ChEBI" id="CHEBI:145989"/>
        <dbReference type="ChEBI" id="CHEBI:456216"/>
        <dbReference type="EC" id="2.7.1.71"/>
    </reaction>
</comment>
<comment type="cofactor">
    <cofactor evidence="1">
        <name>Mg(2+)</name>
        <dbReference type="ChEBI" id="CHEBI:18420"/>
    </cofactor>
    <text evidence="1">Binds 1 Mg(2+) ion per subunit.</text>
</comment>
<comment type="pathway">
    <text evidence="1">Metabolic intermediate biosynthesis; chorismate biosynthesis; chorismate from D-erythrose 4-phosphate and phosphoenolpyruvate: step 5/7.</text>
</comment>
<comment type="subunit">
    <text evidence="1">Monomer.</text>
</comment>
<comment type="subcellular location">
    <subcellularLocation>
        <location evidence="1">Cytoplasm</location>
    </subcellularLocation>
</comment>
<comment type="similarity">
    <text evidence="1">Belongs to the shikimate kinase family.</text>
</comment>
<reference key="1">
    <citation type="journal article" date="2003" name="Nat. Genet.">
        <title>Comparative analysis of the genome sequences of Bordetella pertussis, Bordetella parapertussis and Bordetella bronchiseptica.</title>
        <authorList>
            <person name="Parkhill J."/>
            <person name="Sebaihia M."/>
            <person name="Preston A."/>
            <person name="Murphy L.D."/>
            <person name="Thomson N.R."/>
            <person name="Harris D.E."/>
            <person name="Holden M.T.G."/>
            <person name="Churcher C.M."/>
            <person name="Bentley S.D."/>
            <person name="Mungall K.L."/>
            <person name="Cerdeno-Tarraga A.-M."/>
            <person name="Temple L."/>
            <person name="James K.D."/>
            <person name="Harris B."/>
            <person name="Quail M.A."/>
            <person name="Achtman M."/>
            <person name="Atkin R."/>
            <person name="Baker S."/>
            <person name="Basham D."/>
            <person name="Bason N."/>
            <person name="Cherevach I."/>
            <person name="Chillingworth T."/>
            <person name="Collins M."/>
            <person name="Cronin A."/>
            <person name="Davis P."/>
            <person name="Doggett J."/>
            <person name="Feltwell T."/>
            <person name="Goble A."/>
            <person name="Hamlin N."/>
            <person name="Hauser H."/>
            <person name="Holroyd S."/>
            <person name="Jagels K."/>
            <person name="Leather S."/>
            <person name="Moule S."/>
            <person name="Norberczak H."/>
            <person name="O'Neil S."/>
            <person name="Ormond D."/>
            <person name="Price C."/>
            <person name="Rabbinowitsch E."/>
            <person name="Rutter S."/>
            <person name="Sanders M."/>
            <person name="Saunders D."/>
            <person name="Seeger K."/>
            <person name="Sharp S."/>
            <person name="Simmonds M."/>
            <person name="Skelton J."/>
            <person name="Squares R."/>
            <person name="Squares S."/>
            <person name="Stevens K."/>
            <person name="Unwin L."/>
            <person name="Whitehead S."/>
            <person name="Barrell B.G."/>
            <person name="Maskell D.J."/>
        </authorList>
    </citation>
    <scope>NUCLEOTIDE SEQUENCE [LARGE SCALE GENOMIC DNA]</scope>
    <source>
        <strain>ATCC BAA-588 / NCTC 13252 / RB50</strain>
    </source>
</reference>
<keyword id="KW-0028">Amino-acid biosynthesis</keyword>
<keyword id="KW-0057">Aromatic amino acid biosynthesis</keyword>
<keyword id="KW-0067">ATP-binding</keyword>
<keyword id="KW-0963">Cytoplasm</keyword>
<keyword id="KW-0418">Kinase</keyword>
<keyword id="KW-0460">Magnesium</keyword>
<keyword id="KW-0479">Metal-binding</keyword>
<keyword id="KW-0547">Nucleotide-binding</keyword>
<keyword id="KW-0808">Transferase</keyword>